<dbReference type="EC" id="5.3.1.23" evidence="1"/>
<dbReference type="EMBL" id="CP001661">
    <property type="protein sequence ID" value="ACT19772.1"/>
    <property type="molecule type" value="Genomic_DNA"/>
</dbReference>
<dbReference type="SMR" id="C6E6Z4"/>
<dbReference type="STRING" id="443144.GM21_3753"/>
<dbReference type="KEGG" id="gem:GM21_3753"/>
<dbReference type="eggNOG" id="COG0182">
    <property type="taxonomic scope" value="Bacteria"/>
</dbReference>
<dbReference type="HOGENOM" id="CLU_016218_1_2_7"/>
<dbReference type="OrthoDB" id="9803436at2"/>
<dbReference type="UniPathway" id="UPA00904">
    <property type="reaction ID" value="UER00874"/>
</dbReference>
<dbReference type="GO" id="GO:0046523">
    <property type="term" value="F:S-methyl-5-thioribose-1-phosphate isomerase activity"/>
    <property type="evidence" value="ECO:0007669"/>
    <property type="project" value="UniProtKB-UniRule"/>
</dbReference>
<dbReference type="GO" id="GO:0019509">
    <property type="term" value="P:L-methionine salvage from methylthioadenosine"/>
    <property type="evidence" value="ECO:0007669"/>
    <property type="project" value="UniProtKB-UniRule"/>
</dbReference>
<dbReference type="FunFam" id="1.20.120.420:FF:000001">
    <property type="entry name" value="Methylthioribose-1-phosphate isomerase"/>
    <property type="match status" value="1"/>
</dbReference>
<dbReference type="FunFam" id="3.40.50.10470:FF:000010">
    <property type="entry name" value="Methylthioribose-1-phosphate isomerase"/>
    <property type="match status" value="1"/>
</dbReference>
<dbReference type="Gene3D" id="1.20.120.420">
    <property type="entry name" value="translation initiation factor eif-2b, domain 1"/>
    <property type="match status" value="1"/>
</dbReference>
<dbReference type="Gene3D" id="3.40.50.10470">
    <property type="entry name" value="Translation initiation factor eif-2b, domain 2"/>
    <property type="match status" value="1"/>
</dbReference>
<dbReference type="HAMAP" id="MF_01678">
    <property type="entry name" value="Salvage_MtnA"/>
    <property type="match status" value="1"/>
</dbReference>
<dbReference type="InterPro" id="IPR000649">
    <property type="entry name" value="IF-2B-related"/>
</dbReference>
<dbReference type="InterPro" id="IPR005251">
    <property type="entry name" value="IF-M1Pi"/>
</dbReference>
<dbReference type="InterPro" id="IPR042529">
    <property type="entry name" value="IF_2B-like_C"/>
</dbReference>
<dbReference type="InterPro" id="IPR011559">
    <property type="entry name" value="Initiation_fac_2B_a/b/d"/>
</dbReference>
<dbReference type="InterPro" id="IPR027363">
    <property type="entry name" value="M1Pi_N"/>
</dbReference>
<dbReference type="InterPro" id="IPR037171">
    <property type="entry name" value="NagB/RpiA_transferase-like"/>
</dbReference>
<dbReference type="NCBIfam" id="TIGR00524">
    <property type="entry name" value="eIF-2B_rel"/>
    <property type="match status" value="1"/>
</dbReference>
<dbReference type="NCBIfam" id="NF004326">
    <property type="entry name" value="PRK05720.1"/>
    <property type="match status" value="1"/>
</dbReference>
<dbReference type="NCBIfam" id="TIGR00512">
    <property type="entry name" value="salvage_mtnA"/>
    <property type="match status" value="1"/>
</dbReference>
<dbReference type="PANTHER" id="PTHR43475">
    <property type="entry name" value="METHYLTHIORIBOSE-1-PHOSPHATE ISOMERASE"/>
    <property type="match status" value="1"/>
</dbReference>
<dbReference type="PANTHER" id="PTHR43475:SF1">
    <property type="entry name" value="METHYLTHIORIBOSE-1-PHOSPHATE ISOMERASE"/>
    <property type="match status" value="1"/>
</dbReference>
<dbReference type="Pfam" id="PF01008">
    <property type="entry name" value="IF-2B"/>
    <property type="match status" value="1"/>
</dbReference>
<dbReference type="SUPFAM" id="SSF100950">
    <property type="entry name" value="NagB/RpiA/CoA transferase-like"/>
    <property type="match status" value="1"/>
</dbReference>
<accession>C6E6Z4</accession>
<organism>
    <name type="scientific">Geobacter sp. (strain M21)</name>
    <dbReference type="NCBI Taxonomy" id="443144"/>
    <lineage>
        <taxon>Bacteria</taxon>
        <taxon>Pseudomonadati</taxon>
        <taxon>Thermodesulfobacteriota</taxon>
        <taxon>Desulfuromonadia</taxon>
        <taxon>Geobacterales</taxon>
        <taxon>Geobacteraceae</taxon>
        <taxon>Geobacter</taxon>
    </lineage>
</organism>
<gene>
    <name evidence="1" type="primary">mtnA</name>
    <name type="ordered locus">GM21_3753</name>
</gene>
<comment type="function">
    <text evidence="1">Catalyzes the interconversion of methylthioribose-1-phosphate (MTR-1-P) into methylthioribulose-1-phosphate (MTRu-1-P).</text>
</comment>
<comment type="catalytic activity">
    <reaction evidence="1">
        <text>5-(methylsulfanyl)-alpha-D-ribose 1-phosphate = 5-(methylsulfanyl)-D-ribulose 1-phosphate</text>
        <dbReference type="Rhea" id="RHEA:19989"/>
        <dbReference type="ChEBI" id="CHEBI:58533"/>
        <dbReference type="ChEBI" id="CHEBI:58548"/>
        <dbReference type="EC" id="5.3.1.23"/>
    </reaction>
</comment>
<comment type="pathway">
    <text evidence="1">Amino-acid biosynthesis; L-methionine biosynthesis via salvage pathway; L-methionine from S-methyl-5-thio-alpha-D-ribose 1-phosphate: step 1/6.</text>
</comment>
<comment type="similarity">
    <text evidence="2">Belongs to the eIF-2B alpha/beta/delta subunits family. MtnA subfamily.</text>
</comment>
<reference key="1">
    <citation type="submission" date="2009-07" db="EMBL/GenBank/DDBJ databases">
        <title>Complete sequence of Geobacter sp. M21.</title>
        <authorList>
            <consortium name="US DOE Joint Genome Institute"/>
            <person name="Lucas S."/>
            <person name="Copeland A."/>
            <person name="Lapidus A."/>
            <person name="Glavina del Rio T."/>
            <person name="Dalin E."/>
            <person name="Tice H."/>
            <person name="Bruce D."/>
            <person name="Goodwin L."/>
            <person name="Pitluck S."/>
            <person name="Saunders E."/>
            <person name="Brettin T."/>
            <person name="Detter J.C."/>
            <person name="Han C."/>
            <person name="Larimer F."/>
            <person name="Land M."/>
            <person name="Hauser L."/>
            <person name="Kyrpides N."/>
            <person name="Ovchinnikova G."/>
            <person name="Lovley D."/>
        </authorList>
    </citation>
    <scope>NUCLEOTIDE SEQUENCE [LARGE SCALE GENOMIC DNA]</scope>
    <source>
        <strain>M21</strain>
    </source>
</reference>
<sequence length="346" mass="37724">MSFRTIEWRDNKVIMIDQTRLPAEEVYNEYTDFQSVAQAIRGMVVRGAPAIGIAAAMGVALGAREIIADSFDTFYRQLENVCDVIGRTRPTAVNLFWGLERMKRVALQHKELDLNSIRELLKAEAISIETEDLAICKEIGRHGAALVKEGASILTHCNAGGLATAGYGTALGVIRGAHEAGKGIRVFADETRPWLQGARLTAWELMKDSIPVTLISDNMAGWLMRTGQIDFCVVGADRIAANGDTANKIGTYSVAVLAKENRIPFYVAAPISTLDLKLANGDLIPIEERASEEVTQIKGIQIAPEGVKVRNPAFDVTPARYITGIITEKGVVRGDYERELKALVGQ</sequence>
<protein>
    <recommendedName>
        <fullName evidence="1">Methylthioribose-1-phosphate isomerase</fullName>
        <shortName evidence="1">M1Pi</shortName>
        <shortName evidence="1">MTR-1-P isomerase</shortName>
        <ecNumber evidence="1">5.3.1.23</ecNumber>
    </recommendedName>
    <alternativeName>
        <fullName evidence="1">S-methyl-5-thioribose-1-phosphate isomerase</fullName>
    </alternativeName>
</protein>
<evidence type="ECO:0000255" key="1">
    <source>
        <dbReference type="HAMAP-Rule" id="MF_01678"/>
    </source>
</evidence>
<evidence type="ECO:0000305" key="2"/>
<name>MTNA_GEOSM</name>
<feature type="chain" id="PRO_1000215898" description="Methylthioribose-1-phosphate isomerase">
    <location>
        <begin position="1"/>
        <end position="346"/>
    </location>
</feature>
<feature type="active site" description="Proton donor" evidence="1">
    <location>
        <position position="237"/>
    </location>
</feature>
<feature type="binding site" evidence="1">
    <location>
        <begin position="46"/>
        <end position="48"/>
    </location>
    <ligand>
        <name>substrate</name>
    </ligand>
</feature>
<feature type="binding site" evidence="1">
    <location>
        <position position="89"/>
    </location>
    <ligand>
        <name>substrate</name>
    </ligand>
</feature>
<feature type="binding site" evidence="1">
    <location>
        <position position="196"/>
    </location>
    <ligand>
        <name>substrate</name>
    </ligand>
</feature>
<feature type="binding site" evidence="1">
    <location>
        <begin position="247"/>
        <end position="248"/>
    </location>
    <ligand>
        <name>substrate</name>
    </ligand>
</feature>
<feature type="site" description="Transition state stabilizer" evidence="1">
    <location>
        <position position="157"/>
    </location>
</feature>
<keyword id="KW-0028">Amino-acid biosynthesis</keyword>
<keyword id="KW-0413">Isomerase</keyword>
<keyword id="KW-0486">Methionine biosynthesis</keyword>
<proteinExistence type="inferred from homology"/>